<name>SMG_BORPE</name>
<accession>Q7VSG7</accession>
<protein>
    <recommendedName>
        <fullName evidence="1">Protein Smg homolog</fullName>
    </recommendedName>
</protein>
<sequence>MFDILVYLFENYYTPQACPAADVLAKRLAAAGFEHEDIDDALGWLYGLAETTERCVELAHAPATGIRIYTDAEYQQLGTESIGFITFLESAGVLPAPLREIVIDRALASPETPISLSKIKIIALMVLWSQEAEIDNLVLEELLDDEGSRRLH</sequence>
<reference key="1">
    <citation type="journal article" date="2003" name="Nat. Genet.">
        <title>Comparative analysis of the genome sequences of Bordetella pertussis, Bordetella parapertussis and Bordetella bronchiseptica.</title>
        <authorList>
            <person name="Parkhill J."/>
            <person name="Sebaihia M."/>
            <person name="Preston A."/>
            <person name="Murphy L.D."/>
            <person name="Thomson N.R."/>
            <person name="Harris D.E."/>
            <person name="Holden M.T.G."/>
            <person name="Churcher C.M."/>
            <person name="Bentley S.D."/>
            <person name="Mungall K.L."/>
            <person name="Cerdeno-Tarraga A.-M."/>
            <person name="Temple L."/>
            <person name="James K.D."/>
            <person name="Harris B."/>
            <person name="Quail M.A."/>
            <person name="Achtman M."/>
            <person name="Atkin R."/>
            <person name="Baker S."/>
            <person name="Basham D."/>
            <person name="Bason N."/>
            <person name="Cherevach I."/>
            <person name="Chillingworth T."/>
            <person name="Collins M."/>
            <person name="Cronin A."/>
            <person name="Davis P."/>
            <person name="Doggett J."/>
            <person name="Feltwell T."/>
            <person name="Goble A."/>
            <person name="Hamlin N."/>
            <person name="Hauser H."/>
            <person name="Holroyd S."/>
            <person name="Jagels K."/>
            <person name="Leather S."/>
            <person name="Moule S."/>
            <person name="Norberczak H."/>
            <person name="O'Neil S."/>
            <person name="Ormond D."/>
            <person name="Price C."/>
            <person name="Rabbinowitsch E."/>
            <person name="Rutter S."/>
            <person name="Sanders M."/>
            <person name="Saunders D."/>
            <person name="Seeger K."/>
            <person name="Sharp S."/>
            <person name="Simmonds M."/>
            <person name="Skelton J."/>
            <person name="Squares R."/>
            <person name="Squares S."/>
            <person name="Stevens K."/>
            <person name="Unwin L."/>
            <person name="Whitehead S."/>
            <person name="Barrell B.G."/>
            <person name="Maskell D.J."/>
        </authorList>
    </citation>
    <scope>NUCLEOTIDE SEQUENCE [LARGE SCALE GENOMIC DNA]</scope>
    <source>
        <strain>Tohama I / ATCC BAA-589 / NCTC 13251</strain>
    </source>
</reference>
<organism>
    <name type="scientific">Bordetella pertussis (strain Tohama I / ATCC BAA-589 / NCTC 13251)</name>
    <dbReference type="NCBI Taxonomy" id="257313"/>
    <lineage>
        <taxon>Bacteria</taxon>
        <taxon>Pseudomonadati</taxon>
        <taxon>Pseudomonadota</taxon>
        <taxon>Betaproteobacteria</taxon>
        <taxon>Burkholderiales</taxon>
        <taxon>Alcaligenaceae</taxon>
        <taxon>Bordetella</taxon>
    </lineage>
</organism>
<proteinExistence type="inferred from homology"/>
<comment type="similarity">
    <text evidence="1">Belongs to the Smg family.</text>
</comment>
<gene>
    <name evidence="1" type="primary">smg</name>
    <name type="ordered locus">BP0457</name>
</gene>
<feature type="chain" id="PRO_0000209163" description="Protein Smg homolog">
    <location>
        <begin position="1"/>
        <end position="152"/>
    </location>
</feature>
<keyword id="KW-1185">Reference proteome</keyword>
<dbReference type="EMBL" id="BX640412">
    <property type="protein sequence ID" value="CAE44787.1"/>
    <property type="molecule type" value="Genomic_DNA"/>
</dbReference>
<dbReference type="RefSeq" id="NP_879315.1">
    <property type="nucleotide sequence ID" value="NC_002929.2"/>
</dbReference>
<dbReference type="RefSeq" id="WP_003815964.1">
    <property type="nucleotide sequence ID" value="NZ_CP039022.1"/>
</dbReference>
<dbReference type="SMR" id="Q7VSG7"/>
<dbReference type="STRING" id="257313.BP0457"/>
<dbReference type="PaxDb" id="257313-BP0457"/>
<dbReference type="KEGG" id="bpe:BP0457"/>
<dbReference type="PATRIC" id="fig|257313.5.peg.496"/>
<dbReference type="eggNOG" id="COG2922">
    <property type="taxonomic scope" value="Bacteria"/>
</dbReference>
<dbReference type="HOGENOM" id="CLU_133242_0_0_4"/>
<dbReference type="Proteomes" id="UP000002676">
    <property type="component" value="Chromosome"/>
</dbReference>
<dbReference type="HAMAP" id="MF_00598">
    <property type="entry name" value="Smg"/>
    <property type="match status" value="1"/>
</dbReference>
<dbReference type="InterPro" id="IPR007456">
    <property type="entry name" value="Smg"/>
</dbReference>
<dbReference type="PANTHER" id="PTHR38692">
    <property type="entry name" value="PROTEIN SMG"/>
    <property type="match status" value="1"/>
</dbReference>
<dbReference type="PANTHER" id="PTHR38692:SF1">
    <property type="entry name" value="PROTEIN SMG"/>
    <property type="match status" value="1"/>
</dbReference>
<dbReference type="Pfam" id="PF04361">
    <property type="entry name" value="DUF494"/>
    <property type="match status" value="1"/>
</dbReference>
<evidence type="ECO:0000255" key="1">
    <source>
        <dbReference type="HAMAP-Rule" id="MF_00598"/>
    </source>
</evidence>